<gene>
    <name evidence="1" type="primary">proB</name>
</gene>
<organism>
    <name type="scientific">Meiothermus ruber</name>
    <dbReference type="NCBI Taxonomy" id="277"/>
    <lineage>
        <taxon>Bacteria</taxon>
        <taxon>Thermotogati</taxon>
        <taxon>Deinococcota</taxon>
        <taxon>Deinococci</taxon>
        <taxon>Thermales</taxon>
        <taxon>Thermaceae</taxon>
        <taxon>Meiothermus</taxon>
    </lineage>
</organism>
<feature type="chain" id="PRO_0000109691" description="Glutamate 5-kinase">
    <location>
        <begin position="1"/>
        <end position="377"/>
    </location>
</feature>
<feature type="domain" description="PUA" evidence="1">
    <location>
        <begin position="281"/>
        <end position="359"/>
    </location>
</feature>
<feature type="binding site" evidence="1">
    <location>
        <position position="18"/>
    </location>
    <ligand>
        <name>ATP</name>
        <dbReference type="ChEBI" id="CHEBI:30616"/>
    </ligand>
</feature>
<feature type="binding site" evidence="1">
    <location>
        <position position="55"/>
    </location>
    <ligand>
        <name>substrate</name>
    </ligand>
</feature>
<feature type="binding site" evidence="1">
    <location>
        <position position="142"/>
    </location>
    <ligand>
        <name>substrate</name>
    </ligand>
</feature>
<feature type="binding site" evidence="1">
    <location>
        <position position="154"/>
    </location>
    <ligand>
        <name>substrate</name>
    </ligand>
</feature>
<feature type="binding site" evidence="1">
    <location>
        <begin position="174"/>
        <end position="175"/>
    </location>
    <ligand>
        <name>ATP</name>
        <dbReference type="ChEBI" id="CHEBI:30616"/>
    </ligand>
</feature>
<feature type="binding site" evidence="1">
    <location>
        <begin position="216"/>
        <end position="222"/>
    </location>
    <ligand>
        <name>ATP</name>
        <dbReference type="ChEBI" id="CHEBI:30616"/>
    </ligand>
</feature>
<proteinExistence type="inferred from homology"/>
<reference key="1">
    <citation type="submission" date="1998-11" db="EMBL/GenBank/DDBJ databases">
        <title>Molecular cloning and sequence analysis of the proA gene from thermophilic eubacterium Thermus ruber.</title>
        <authorList>
            <person name="Yaklichkin S.Y."/>
            <person name="Zimina M.S."/>
            <person name="Yurchenko Y.V."/>
            <person name="Hromov I.S."/>
            <person name="Neumivakin L.V."/>
        </authorList>
    </citation>
    <scope>NUCLEOTIDE SEQUENCE [GENOMIC DNA]</scope>
    <source>
        <strain>40</strain>
    </source>
</reference>
<comment type="function">
    <text evidence="1">Catalyzes the transfer of a phosphate group to glutamate to form L-glutamate 5-phosphate.</text>
</comment>
<comment type="catalytic activity">
    <reaction evidence="1">
        <text>L-glutamate + ATP = L-glutamyl 5-phosphate + ADP</text>
        <dbReference type="Rhea" id="RHEA:14877"/>
        <dbReference type="ChEBI" id="CHEBI:29985"/>
        <dbReference type="ChEBI" id="CHEBI:30616"/>
        <dbReference type="ChEBI" id="CHEBI:58274"/>
        <dbReference type="ChEBI" id="CHEBI:456216"/>
        <dbReference type="EC" id="2.7.2.11"/>
    </reaction>
</comment>
<comment type="pathway">
    <text evidence="1">Amino-acid biosynthesis; L-proline biosynthesis; L-glutamate 5-semialdehyde from L-glutamate: step 1/2.</text>
</comment>
<comment type="subcellular location">
    <subcellularLocation>
        <location evidence="1">Cytoplasm</location>
    </subcellularLocation>
</comment>
<comment type="similarity">
    <text evidence="1">Belongs to the glutamate 5-kinase family.</text>
</comment>
<comment type="sequence caution" evidence="2">
    <conflict type="erroneous initiation">
        <sequence resource="EMBL-CDS" id="AAC72812"/>
    </conflict>
</comment>
<evidence type="ECO:0000255" key="1">
    <source>
        <dbReference type="HAMAP-Rule" id="MF_00456"/>
    </source>
</evidence>
<evidence type="ECO:0000305" key="2"/>
<keyword id="KW-0028">Amino-acid biosynthesis</keyword>
<keyword id="KW-0067">ATP-binding</keyword>
<keyword id="KW-0963">Cytoplasm</keyword>
<keyword id="KW-0418">Kinase</keyword>
<keyword id="KW-0547">Nucleotide-binding</keyword>
<keyword id="KW-0641">Proline biosynthesis</keyword>
<keyword id="KW-0808">Transferase</keyword>
<sequence>MHGRLPLTAQTHRRLVVKVGSAVLSGPQGRQHQLAIAAQVAALRAEGREVVLVSSGAQATGMQKLGLTEKPKSMPGKQALAAVGQPTLMLLWEQAFSWYDLKVAQVLLTAEDLAHRHRYLNARQTLETLLEWGIVPIINENDTVMVEEIKFGDNDQLSALIASLVGADLLILLSDIEALYEADPRTHPEAQPIPYVERVDAGVLRMAGDSPNRVGTGGMKSKLLAAEKAQAAGIPHLLLPGTRPQSIAEALQGAPVGTLFAGGQRRYSGRKLWLYQLPKPQGEVVVDAGAAKALRQGGASLLPAGILEVRGQFGVGEAVRCLDEQGNLIGVGLVNYSAAELARIKRRKTREIEALLGYKNTDEAIHRDYFALASELE</sequence>
<name>PROB_MEIRU</name>
<dbReference type="EC" id="2.7.2.11" evidence="1"/>
<dbReference type="EMBL" id="AF082661">
    <property type="protein sequence ID" value="AAC72812.1"/>
    <property type="status" value="ALT_INIT"/>
    <property type="molecule type" value="Genomic_DNA"/>
</dbReference>
<dbReference type="SMR" id="Q9ZG98"/>
<dbReference type="UniPathway" id="UPA00098">
    <property type="reaction ID" value="UER00359"/>
</dbReference>
<dbReference type="GO" id="GO:0005829">
    <property type="term" value="C:cytosol"/>
    <property type="evidence" value="ECO:0007669"/>
    <property type="project" value="TreeGrafter"/>
</dbReference>
<dbReference type="GO" id="GO:0005524">
    <property type="term" value="F:ATP binding"/>
    <property type="evidence" value="ECO:0007669"/>
    <property type="project" value="UniProtKB-KW"/>
</dbReference>
<dbReference type="GO" id="GO:0004349">
    <property type="term" value="F:glutamate 5-kinase activity"/>
    <property type="evidence" value="ECO:0007669"/>
    <property type="project" value="UniProtKB-UniRule"/>
</dbReference>
<dbReference type="GO" id="GO:0003723">
    <property type="term" value="F:RNA binding"/>
    <property type="evidence" value="ECO:0007669"/>
    <property type="project" value="InterPro"/>
</dbReference>
<dbReference type="GO" id="GO:0055129">
    <property type="term" value="P:L-proline biosynthetic process"/>
    <property type="evidence" value="ECO:0007669"/>
    <property type="project" value="UniProtKB-UniRule"/>
</dbReference>
<dbReference type="CDD" id="cd04242">
    <property type="entry name" value="AAK_G5K_ProB"/>
    <property type="match status" value="1"/>
</dbReference>
<dbReference type="CDD" id="cd21157">
    <property type="entry name" value="PUA_G5K"/>
    <property type="match status" value="1"/>
</dbReference>
<dbReference type="FunFam" id="2.30.130.10:FF:000007">
    <property type="entry name" value="Glutamate 5-kinase"/>
    <property type="match status" value="1"/>
</dbReference>
<dbReference type="FunFam" id="3.40.1160.10:FF:000018">
    <property type="entry name" value="Glutamate 5-kinase"/>
    <property type="match status" value="1"/>
</dbReference>
<dbReference type="Gene3D" id="3.40.1160.10">
    <property type="entry name" value="Acetylglutamate kinase-like"/>
    <property type="match status" value="1"/>
</dbReference>
<dbReference type="Gene3D" id="2.30.130.10">
    <property type="entry name" value="PUA domain"/>
    <property type="match status" value="1"/>
</dbReference>
<dbReference type="HAMAP" id="MF_00456">
    <property type="entry name" value="ProB"/>
    <property type="match status" value="1"/>
</dbReference>
<dbReference type="InterPro" id="IPR036393">
    <property type="entry name" value="AceGlu_kinase-like_sf"/>
</dbReference>
<dbReference type="InterPro" id="IPR001048">
    <property type="entry name" value="Asp/Glu/Uridylate_kinase"/>
</dbReference>
<dbReference type="InterPro" id="IPR041739">
    <property type="entry name" value="G5K_ProB"/>
</dbReference>
<dbReference type="InterPro" id="IPR001057">
    <property type="entry name" value="Glu/AcGlu_kinase"/>
</dbReference>
<dbReference type="InterPro" id="IPR011529">
    <property type="entry name" value="Glu_5kinase"/>
</dbReference>
<dbReference type="InterPro" id="IPR005715">
    <property type="entry name" value="Glu_5kinase/COase_Synthase"/>
</dbReference>
<dbReference type="InterPro" id="IPR019797">
    <property type="entry name" value="Glutamate_5-kinase_CS"/>
</dbReference>
<dbReference type="InterPro" id="IPR002478">
    <property type="entry name" value="PUA"/>
</dbReference>
<dbReference type="InterPro" id="IPR015947">
    <property type="entry name" value="PUA-like_sf"/>
</dbReference>
<dbReference type="InterPro" id="IPR036974">
    <property type="entry name" value="PUA_sf"/>
</dbReference>
<dbReference type="NCBIfam" id="TIGR01027">
    <property type="entry name" value="proB"/>
    <property type="match status" value="1"/>
</dbReference>
<dbReference type="PANTHER" id="PTHR43654">
    <property type="entry name" value="GLUTAMATE 5-KINASE"/>
    <property type="match status" value="1"/>
</dbReference>
<dbReference type="PANTHER" id="PTHR43654:SF1">
    <property type="entry name" value="ISOPENTENYL PHOSPHATE KINASE"/>
    <property type="match status" value="1"/>
</dbReference>
<dbReference type="Pfam" id="PF00696">
    <property type="entry name" value="AA_kinase"/>
    <property type="match status" value="1"/>
</dbReference>
<dbReference type="Pfam" id="PF01472">
    <property type="entry name" value="PUA"/>
    <property type="match status" value="1"/>
</dbReference>
<dbReference type="PIRSF" id="PIRSF000729">
    <property type="entry name" value="GK"/>
    <property type="match status" value="1"/>
</dbReference>
<dbReference type="PRINTS" id="PR00474">
    <property type="entry name" value="GLU5KINASE"/>
</dbReference>
<dbReference type="SMART" id="SM00359">
    <property type="entry name" value="PUA"/>
    <property type="match status" value="1"/>
</dbReference>
<dbReference type="SUPFAM" id="SSF53633">
    <property type="entry name" value="Carbamate kinase-like"/>
    <property type="match status" value="1"/>
</dbReference>
<dbReference type="SUPFAM" id="SSF88697">
    <property type="entry name" value="PUA domain-like"/>
    <property type="match status" value="1"/>
</dbReference>
<dbReference type="PROSITE" id="PS00902">
    <property type="entry name" value="GLUTAMATE_5_KINASE"/>
    <property type="match status" value="1"/>
</dbReference>
<dbReference type="PROSITE" id="PS50890">
    <property type="entry name" value="PUA"/>
    <property type="match status" value="1"/>
</dbReference>
<accession>Q9ZG98</accession>
<protein>
    <recommendedName>
        <fullName evidence="1">Glutamate 5-kinase</fullName>
        <ecNumber evidence="1">2.7.2.11</ecNumber>
    </recommendedName>
    <alternativeName>
        <fullName evidence="1">Gamma-glutamyl kinase</fullName>
        <shortName evidence="1">GK</shortName>
    </alternativeName>
</protein>